<accession>Q99LZ3</accession>
<accession>Q3TP06</accession>
<feature type="chain" id="PRO_0000421795" description="DNA replication complex GINS protein SLD5">
    <location>
        <begin position="1"/>
        <end position="223"/>
    </location>
</feature>
<feature type="initiator methionine" description="Removed; alternate" evidence="4">
    <location>
        <position position="1"/>
    </location>
</feature>
<feature type="chain" id="PRO_0000327621" description="DNA replication complex GINS protein SLD5, N-terminally processed">
    <location>
        <begin position="2"/>
        <end position="223"/>
    </location>
</feature>
<feature type="region of interest" description="Important for GINS complex assembly" evidence="1">
    <location>
        <begin position="166"/>
        <end position="223"/>
    </location>
</feature>
<feature type="modified residue" description="N-acetylmethionine" evidence="4">
    <location>
        <position position="1"/>
    </location>
</feature>
<feature type="modified residue" description="N-acetylthreonine; in DNA replication complex GINS protein SLD5, N-terminally processed" evidence="4">
    <location>
        <position position="2"/>
    </location>
</feature>
<feature type="modified residue" description="Phosphoserine" evidence="4">
    <location>
        <position position="12"/>
    </location>
</feature>
<feature type="modified residue" description="Phosphoserine" evidence="4">
    <location>
        <position position="16"/>
    </location>
</feature>
<name>SLD5_MOUSE</name>
<dbReference type="EMBL" id="AK076104">
    <property type="protein sequence ID" value="BAC36185.1"/>
    <property type="molecule type" value="mRNA"/>
</dbReference>
<dbReference type="EMBL" id="AK164815">
    <property type="protein sequence ID" value="BAE37931.1"/>
    <property type="molecule type" value="mRNA"/>
</dbReference>
<dbReference type="EMBL" id="BC002156">
    <property type="protein sequence ID" value="AAH02156.1"/>
    <property type="molecule type" value="mRNA"/>
</dbReference>
<dbReference type="CCDS" id="CCDS22190.1"/>
<dbReference type="RefSeq" id="NP_077202.1">
    <property type="nucleotide sequence ID" value="NM_024240.6"/>
</dbReference>
<dbReference type="SMR" id="Q99LZ3"/>
<dbReference type="BioGRID" id="224572">
    <property type="interactions" value="16"/>
</dbReference>
<dbReference type="ComplexPortal" id="CPX-4502">
    <property type="entry name" value="GINS complex"/>
</dbReference>
<dbReference type="FunCoup" id="Q99LZ3">
    <property type="interactions" value="2417"/>
</dbReference>
<dbReference type="IntAct" id="Q99LZ3">
    <property type="interactions" value="1"/>
</dbReference>
<dbReference type="MINT" id="Q99LZ3"/>
<dbReference type="STRING" id="10090.ENSMUSP00000033950"/>
<dbReference type="iPTMnet" id="Q99LZ3"/>
<dbReference type="PhosphoSitePlus" id="Q99LZ3"/>
<dbReference type="SwissPalm" id="Q99LZ3"/>
<dbReference type="PaxDb" id="10090-ENSMUSP00000033950"/>
<dbReference type="PeptideAtlas" id="Q99LZ3"/>
<dbReference type="ProteomicsDB" id="261420"/>
<dbReference type="Pumba" id="Q99LZ3"/>
<dbReference type="Antibodypedia" id="11239">
    <property type="antibodies" value="109 antibodies from 24 providers"/>
</dbReference>
<dbReference type="DNASU" id="109145"/>
<dbReference type="Ensembl" id="ENSMUST00000033950.7">
    <property type="protein sequence ID" value="ENSMUSP00000033950.6"/>
    <property type="gene ID" value="ENSMUSG00000031546.7"/>
</dbReference>
<dbReference type="GeneID" id="109145"/>
<dbReference type="KEGG" id="mmu:109145"/>
<dbReference type="UCSC" id="uc009ler.2">
    <property type="organism name" value="mouse"/>
</dbReference>
<dbReference type="AGR" id="MGI:1923847"/>
<dbReference type="CTD" id="84296"/>
<dbReference type="MGI" id="MGI:1923847">
    <property type="gene designation" value="Gins4"/>
</dbReference>
<dbReference type="VEuPathDB" id="HostDB:ENSMUSG00000031546"/>
<dbReference type="eggNOG" id="KOG3176">
    <property type="taxonomic scope" value="Eukaryota"/>
</dbReference>
<dbReference type="GeneTree" id="ENSGT00390000003246"/>
<dbReference type="HOGENOM" id="CLU_071893_3_0_1"/>
<dbReference type="InParanoid" id="Q99LZ3"/>
<dbReference type="OMA" id="ILETAWI"/>
<dbReference type="OrthoDB" id="338231at2759"/>
<dbReference type="PhylomeDB" id="Q99LZ3"/>
<dbReference type="TreeFam" id="TF105863"/>
<dbReference type="Reactome" id="R-MMU-176974">
    <property type="pathway name" value="Unwinding of DNA"/>
</dbReference>
<dbReference type="BioGRID-ORCS" id="109145">
    <property type="hits" value="37 hits in 116 CRISPR screens"/>
</dbReference>
<dbReference type="ChiTaRS" id="Gins4">
    <property type="organism name" value="mouse"/>
</dbReference>
<dbReference type="PRO" id="PR:Q99LZ3"/>
<dbReference type="Proteomes" id="UP000000589">
    <property type="component" value="Chromosome 8"/>
</dbReference>
<dbReference type="RNAct" id="Q99LZ3">
    <property type="molecule type" value="protein"/>
</dbReference>
<dbReference type="Bgee" id="ENSMUSG00000031546">
    <property type="expression patterns" value="Expressed in ectoderm and 251 other cell types or tissues"/>
</dbReference>
<dbReference type="GO" id="GO:0071162">
    <property type="term" value="C:CMG complex"/>
    <property type="evidence" value="ECO:0000250"/>
    <property type="project" value="UniProtKB"/>
</dbReference>
<dbReference type="GO" id="GO:0005737">
    <property type="term" value="C:cytoplasm"/>
    <property type="evidence" value="ECO:0000314"/>
    <property type="project" value="MGI"/>
</dbReference>
<dbReference type="GO" id="GO:0000811">
    <property type="term" value="C:GINS complex"/>
    <property type="evidence" value="ECO:0000266"/>
    <property type="project" value="ComplexPortal"/>
</dbReference>
<dbReference type="GO" id="GO:0005634">
    <property type="term" value="C:nucleus"/>
    <property type="evidence" value="ECO:0000314"/>
    <property type="project" value="MGI"/>
</dbReference>
<dbReference type="GO" id="GO:0006261">
    <property type="term" value="P:DNA-templated DNA replication"/>
    <property type="evidence" value="ECO:0007669"/>
    <property type="project" value="InterPro"/>
</dbReference>
<dbReference type="GO" id="GO:0001833">
    <property type="term" value="P:inner cell mass cell proliferation"/>
    <property type="evidence" value="ECO:0000315"/>
    <property type="project" value="MGI"/>
</dbReference>
<dbReference type="CDD" id="cd11711">
    <property type="entry name" value="GINS_A_Sld5"/>
    <property type="match status" value="1"/>
</dbReference>
<dbReference type="CDD" id="cd21692">
    <property type="entry name" value="GINS_B_Sld5"/>
    <property type="match status" value="1"/>
</dbReference>
<dbReference type="FunFam" id="1.20.58.1030:FF:000002">
    <property type="entry name" value="DNA replication complex GINS protein SLD5"/>
    <property type="match status" value="1"/>
</dbReference>
<dbReference type="FunFam" id="3.40.5.60:FF:000001">
    <property type="entry name" value="DNA replication complex GINS protein SLD5"/>
    <property type="match status" value="1"/>
</dbReference>
<dbReference type="Gene3D" id="1.20.58.1030">
    <property type="match status" value="1"/>
</dbReference>
<dbReference type="Gene3D" id="3.40.5.60">
    <property type="match status" value="1"/>
</dbReference>
<dbReference type="InterPro" id="IPR021151">
    <property type="entry name" value="GINS_A"/>
</dbReference>
<dbReference type="InterPro" id="IPR036224">
    <property type="entry name" value="GINS_bundle-like_dom_sf"/>
</dbReference>
<dbReference type="InterPro" id="IPR008591">
    <property type="entry name" value="GINS_Sld5"/>
</dbReference>
<dbReference type="InterPro" id="IPR031633">
    <property type="entry name" value="SLD5_C"/>
</dbReference>
<dbReference type="InterPro" id="IPR038749">
    <property type="entry name" value="Sld5_GINS_A"/>
</dbReference>
<dbReference type="PANTHER" id="PTHR21206:SF0">
    <property type="entry name" value="DNA REPLICATION COMPLEX GINS PROTEIN SLD5"/>
    <property type="match status" value="1"/>
</dbReference>
<dbReference type="PANTHER" id="PTHR21206">
    <property type="entry name" value="SLD5 PROTEIN"/>
    <property type="match status" value="1"/>
</dbReference>
<dbReference type="Pfam" id="PF05916">
    <property type="entry name" value="Sld5"/>
    <property type="match status" value="1"/>
</dbReference>
<dbReference type="Pfam" id="PF16922">
    <property type="entry name" value="SLD5_C"/>
    <property type="match status" value="1"/>
</dbReference>
<dbReference type="PIRSF" id="PIRSF007764">
    <property type="entry name" value="Sld5"/>
    <property type="match status" value="1"/>
</dbReference>
<dbReference type="SUPFAM" id="SSF158573">
    <property type="entry name" value="GINS helical bundle-like"/>
    <property type="match status" value="1"/>
</dbReference>
<dbReference type="SUPFAM" id="SSF160059">
    <property type="entry name" value="PriA/YqbF domain"/>
    <property type="match status" value="1"/>
</dbReference>
<organism>
    <name type="scientific">Mus musculus</name>
    <name type="common">Mouse</name>
    <dbReference type="NCBI Taxonomy" id="10090"/>
    <lineage>
        <taxon>Eukaryota</taxon>
        <taxon>Metazoa</taxon>
        <taxon>Chordata</taxon>
        <taxon>Craniata</taxon>
        <taxon>Vertebrata</taxon>
        <taxon>Euteleostomi</taxon>
        <taxon>Mammalia</taxon>
        <taxon>Eutheria</taxon>
        <taxon>Euarchontoglires</taxon>
        <taxon>Glires</taxon>
        <taxon>Rodentia</taxon>
        <taxon>Myomorpha</taxon>
        <taxon>Muroidea</taxon>
        <taxon>Muridae</taxon>
        <taxon>Murinae</taxon>
        <taxon>Mus</taxon>
        <taxon>Mus</taxon>
    </lineage>
</organism>
<reference key="1">
    <citation type="journal article" date="2005" name="Science">
        <title>The transcriptional landscape of the mammalian genome.</title>
        <authorList>
            <person name="Carninci P."/>
            <person name="Kasukawa T."/>
            <person name="Katayama S."/>
            <person name="Gough J."/>
            <person name="Frith M.C."/>
            <person name="Maeda N."/>
            <person name="Oyama R."/>
            <person name="Ravasi T."/>
            <person name="Lenhard B."/>
            <person name="Wells C."/>
            <person name="Kodzius R."/>
            <person name="Shimokawa K."/>
            <person name="Bajic V.B."/>
            <person name="Brenner S.E."/>
            <person name="Batalov S."/>
            <person name="Forrest A.R."/>
            <person name="Zavolan M."/>
            <person name="Davis M.J."/>
            <person name="Wilming L.G."/>
            <person name="Aidinis V."/>
            <person name="Allen J.E."/>
            <person name="Ambesi-Impiombato A."/>
            <person name="Apweiler R."/>
            <person name="Aturaliya R.N."/>
            <person name="Bailey T.L."/>
            <person name="Bansal M."/>
            <person name="Baxter L."/>
            <person name="Beisel K.W."/>
            <person name="Bersano T."/>
            <person name="Bono H."/>
            <person name="Chalk A.M."/>
            <person name="Chiu K.P."/>
            <person name="Choudhary V."/>
            <person name="Christoffels A."/>
            <person name="Clutterbuck D.R."/>
            <person name="Crowe M.L."/>
            <person name="Dalla E."/>
            <person name="Dalrymple B.P."/>
            <person name="de Bono B."/>
            <person name="Della Gatta G."/>
            <person name="di Bernardo D."/>
            <person name="Down T."/>
            <person name="Engstrom P."/>
            <person name="Fagiolini M."/>
            <person name="Faulkner G."/>
            <person name="Fletcher C.F."/>
            <person name="Fukushima T."/>
            <person name="Furuno M."/>
            <person name="Futaki S."/>
            <person name="Gariboldi M."/>
            <person name="Georgii-Hemming P."/>
            <person name="Gingeras T.R."/>
            <person name="Gojobori T."/>
            <person name="Green R.E."/>
            <person name="Gustincich S."/>
            <person name="Harbers M."/>
            <person name="Hayashi Y."/>
            <person name="Hensch T.K."/>
            <person name="Hirokawa N."/>
            <person name="Hill D."/>
            <person name="Huminiecki L."/>
            <person name="Iacono M."/>
            <person name="Ikeo K."/>
            <person name="Iwama A."/>
            <person name="Ishikawa T."/>
            <person name="Jakt M."/>
            <person name="Kanapin A."/>
            <person name="Katoh M."/>
            <person name="Kawasawa Y."/>
            <person name="Kelso J."/>
            <person name="Kitamura H."/>
            <person name="Kitano H."/>
            <person name="Kollias G."/>
            <person name="Krishnan S.P."/>
            <person name="Kruger A."/>
            <person name="Kummerfeld S.K."/>
            <person name="Kurochkin I.V."/>
            <person name="Lareau L.F."/>
            <person name="Lazarevic D."/>
            <person name="Lipovich L."/>
            <person name="Liu J."/>
            <person name="Liuni S."/>
            <person name="McWilliam S."/>
            <person name="Madan Babu M."/>
            <person name="Madera M."/>
            <person name="Marchionni L."/>
            <person name="Matsuda H."/>
            <person name="Matsuzawa S."/>
            <person name="Miki H."/>
            <person name="Mignone F."/>
            <person name="Miyake S."/>
            <person name="Morris K."/>
            <person name="Mottagui-Tabar S."/>
            <person name="Mulder N."/>
            <person name="Nakano N."/>
            <person name="Nakauchi H."/>
            <person name="Ng P."/>
            <person name="Nilsson R."/>
            <person name="Nishiguchi S."/>
            <person name="Nishikawa S."/>
            <person name="Nori F."/>
            <person name="Ohara O."/>
            <person name="Okazaki Y."/>
            <person name="Orlando V."/>
            <person name="Pang K.C."/>
            <person name="Pavan W.J."/>
            <person name="Pavesi G."/>
            <person name="Pesole G."/>
            <person name="Petrovsky N."/>
            <person name="Piazza S."/>
            <person name="Reed J."/>
            <person name="Reid J.F."/>
            <person name="Ring B.Z."/>
            <person name="Ringwald M."/>
            <person name="Rost B."/>
            <person name="Ruan Y."/>
            <person name="Salzberg S.L."/>
            <person name="Sandelin A."/>
            <person name="Schneider C."/>
            <person name="Schoenbach C."/>
            <person name="Sekiguchi K."/>
            <person name="Semple C.A."/>
            <person name="Seno S."/>
            <person name="Sessa L."/>
            <person name="Sheng Y."/>
            <person name="Shibata Y."/>
            <person name="Shimada H."/>
            <person name="Shimada K."/>
            <person name="Silva D."/>
            <person name="Sinclair B."/>
            <person name="Sperling S."/>
            <person name="Stupka E."/>
            <person name="Sugiura K."/>
            <person name="Sultana R."/>
            <person name="Takenaka Y."/>
            <person name="Taki K."/>
            <person name="Tammoja K."/>
            <person name="Tan S.L."/>
            <person name="Tang S."/>
            <person name="Taylor M.S."/>
            <person name="Tegner J."/>
            <person name="Teichmann S.A."/>
            <person name="Ueda H.R."/>
            <person name="van Nimwegen E."/>
            <person name="Verardo R."/>
            <person name="Wei C.L."/>
            <person name="Yagi K."/>
            <person name="Yamanishi H."/>
            <person name="Zabarovsky E."/>
            <person name="Zhu S."/>
            <person name="Zimmer A."/>
            <person name="Hide W."/>
            <person name="Bult C."/>
            <person name="Grimmond S.M."/>
            <person name="Teasdale R.D."/>
            <person name="Liu E.T."/>
            <person name="Brusic V."/>
            <person name="Quackenbush J."/>
            <person name="Wahlestedt C."/>
            <person name="Mattick J.S."/>
            <person name="Hume D.A."/>
            <person name="Kai C."/>
            <person name="Sasaki D."/>
            <person name="Tomaru Y."/>
            <person name="Fukuda S."/>
            <person name="Kanamori-Katayama M."/>
            <person name="Suzuki M."/>
            <person name="Aoki J."/>
            <person name="Arakawa T."/>
            <person name="Iida J."/>
            <person name="Imamura K."/>
            <person name="Itoh M."/>
            <person name="Kato T."/>
            <person name="Kawaji H."/>
            <person name="Kawagashira N."/>
            <person name="Kawashima T."/>
            <person name="Kojima M."/>
            <person name="Kondo S."/>
            <person name="Konno H."/>
            <person name="Nakano K."/>
            <person name="Ninomiya N."/>
            <person name="Nishio T."/>
            <person name="Okada M."/>
            <person name="Plessy C."/>
            <person name="Shibata K."/>
            <person name="Shiraki T."/>
            <person name="Suzuki S."/>
            <person name="Tagami M."/>
            <person name="Waki K."/>
            <person name="Watahiki A."/>
            <person name="Okamura-Oho Y."/>
            <person name="Suzuki H."/>
            <person name="Kawai J."/>
            <person name="Hayashizaki Y."/>
        </authorList>
    </citation>
    <scope>NUCLEOTIDE SEQUENCE [LARGE SCALE MRNA]</scope>
    <source>
        <strain>C57BL/6J</strain>
        <tissue>Heart</tissue>
    </source>
</reference>
<reference key="2">
    <citation type="journal article" date="2004" name="Genome Res.">
        <title>The status, quality, and expansion of the NIH full-length cDNA project: the Mammalian Gene Collection (MGC).</title>
        <authorList>
            <consortium name="The MGC Project Team"/>
        </authorList>
    </citation>
    <scope>NUCLEOTIDE SEQUENCE [LARGE SCALE MRNA]</scope>
    <source>
        <strain>FVB/N</strain>
        <tissue>Mammary tumor</tissue>
    </source>
</reference>
<reference key="3">
    <citation type="journal article" date="2006" name="Biochem. Biophys. Res. Commun.">
        <title>Identification and characterization of mouse PSF1-binding protein, SLD5.</title>
        <authorList>
            <person name="Kong L."/>
            <person name="Ueno M."/>
            <person name="Itoh M."/>
            <person name="Yoshioka K."/>
            <person name="Takakura N."/>
        </authorList>
    </citation>
    <scope>INTERACTION WITH GINS1</scope>
    <scope>SUBCELLULAR LOCATION</scope>
    <scope>TISSUE SPECIFICITY</scope>
</reference>
<reference key="4">
    <citation type="journal article" date="2010" name="Cell">
        <title>A tissue-specific atlas of mouse protein phosphorylation and expression.</title>
        <authorList>
            <person name="Huttlin E.L."/>
            <person name="Jedrychowski M.P."/>
            <person name="Elias J.E."/>
            <person name="Goswami T."/>
            <person name="Rad R."/>
            <person name="Beausoleil S.A."/>
            <person name="Villen J."/>
            <person name="Haas W."/>
            <person name="Sowa M.E."/>
            <person name="Gygi S.P."/>
        </authorList>
    </citation>
    <scope>IDENTIFICATION BY MASS SPECTROMETRY [LARGE SCALE ANALYSIS]</scope>
    <source>
        <tissue>Spleen</tissue>
        <tissue>Testis</tissue>
    </source>
</reference>
<evidence type="ECO:0000250" key="1"/>
<evidence type="ECO:0000250" key="2">
    <source>
        <dbReference type="UniProtKB" id="O75419"/>
    </source>
</evidence>
<evidence type="ECO:0000250" key="3">
    <source>
        <dbReference type="UniProtKB" id="Q7ZT48"/>
    </source>
</evidence>
<evidence type="ECO:0000250" key="4">
    <source>
        <dbReference type="UniProtKB" id="Q9BRT9"/>
    </source>
</evidence>
<evidence type="ECO:0000269" key="5">
    <source>
    </source>
</evidence>
<evidence type="ECO:0000305" key="6"/>
<keyword id="KW-0007">Acetylation</keyword>
<keyword id="KW-0158">Chromosome</keyword>
<keyword id="KW-0963">Cytoplasm</keyword>
<keyword id="KW-0235">DNA replication</keyword>
<keyword id="KW-0539">Nucleus</keyword>
<keyword id="KW-0597">Phosphoprotein</keyword>
<keyword id="KW-1185">Reference proteome</keyword>
<comment type="function">
    <text evidence="2">Required for initiation of chromosomal DNA replication. Core component of CDC45-MCM-GINS (CMG) helicase, the molecular machine that unwinds template DNA during replication, and around which the replisome is built.</text>
</comment>
<comment type="subunit">
    <text evidence="2">Component of the CMG helicase complex, a hexameric ring of related MCM2-7 subunits stabilized by CDC45 and the tetrameric GINS complex. Associated with ORC2. Interacts with HELB.</text>
</comment>
<comment type="subcellular location">
    <subcellularLocation>
        <location evidence="5">Nucleus</location>
    </subcellularLocation>
    <subcellularLocation>
        <location evidence="3">Chromosome</location>
    </subcellularLocation>
    <subcellularLocation>
        <location evidence="5">Cytoplasm</location>
    </subcellularLocation>
</comment>
<comment type="tissue specificity">
    <text evidence="5">Highly abundant in testis. Weakly expressed in thymus and bone marrow.</text>
</comment>
<comment type="similarity">
    <text evidence="6">Belongs to the GINS4/SLD5 family.</text>
</comment>
<gene>
    <name type="primary">Gins4</name>
    <name type="synonym">Sld5</name>
</gene>
<proteinExistence type="evidence at protein level"/>
<sequence length="223" mass="25961">MTEVLDLHGQDSDGGSEEMVLTPAELIEKLEQAWMNEKFAPELLESKAEIVECVMEQLEHMEENLRRAKKGDLKVSIHRMEMERIRYVLSSYLRCRLMKIEKFFPHILEKEKVRSEGEPSSLSPEEFVFAKEYMDHTETHFKNVALKHMPPNLQKVDLLRAVPKPDLDSYVFLRVKERQENILVEPEADEQRDYVIDLEVGSQHLIRYKTIAPLVASGAVQLI</sequence>
<protein>
    <recommendedName>
        <fullName>DNA replication complex GINS protein SLD5</fullName>
    </recommendedName>
    <alternativeName>
        <fullName>GINS complex subunit 4</fullName>
    </alternativeName>
    <component>
        <recommendedName>
            <fullName>DNA replication complex GINS protein SLD5, N-terminally processed</fullName>
        </recommendedName>
    </component>
</protein>